<accession>P47412</accession>
<evidence type="ECO:0000255" key="1">
    <source>
        <dbReference type="HAMAP-Rule" id="MF_01365"/>
    </source>
</evidence>
<evidence type="ECO:0000305" key="2"/>
<comment type="function">
    <text evidence="1">This protein binds to the 23S rRNA, and is important in its secondary structure. It is located near the subunit interface in the base of the L7/L12 stalk, and near the tRNA binding site of the peptidyltransferase center.</text>
</comment>
<comment type="subunit">
    <text evidence="1">Part of the 50S ribosomal subunit.</text>
</comment>
<comment type="similarity">
    <text evidence="1">Belongs to the universal ribosomal protein uL6 family.</text>
</comment>
<feature type="chain" id="PRO_0000131059" description="Large ribosomal subunit protein uL6">
    <location>
        <begin position="1"/>
        <end position="184"/>
    </location>
</feature>
<sequence>MSKIGNRSIKIDPSKVSLMQTTTLLTIKGPLGENTIKLPKNLPLKFVVENDTIKVTNNNNLKQTKILHGTFNALVNNAVIGVTKGFEKKLILVGVGYRANVEGQFLNLQLGYSHPIKELIPNQLTVKVEKNTEITISGIKKELVGQFATEIRKWRKPEPYKGKGVLYFNEVIVRKQGKTAEGKK</sequence>
<proteinExistence type="inferred from homology"/>
<keyword id="KW-1185">Reference proteome</keyword>
<keyword id="KW-0687">Ribonucleoprotein</keyword>
<keyword id="KW-0689">Ribosomal protein</keyword>
<keyword id="KW-0694">RNA-binding</keyword>
<keyword id="KW-0699">rRNA-binding</keyword>
<dbReference type="EMBL" id="L43967">
    <property type="protein sequence ID" value="AAC71384.1"/>
    <property type="molecule type" value="Genomic_DNA"/>
</dbReference>
<dbReference type="PIR" id="D64218">
    <property type="entry name" value="D64218"/>
</dbReference>
<dbReference type="RefSeq" id="WP_010869360.1">
    <property type="nucleotide sequence ID" value="NC_000908.2"/>
</dbReference>
<dbReference type="SMR" id="P47412"/>
<dbReference type="FunCoup" id="P47412">
    <property type="interactions" value="209"/>
</dbReference>
<dbReference type="STRING" id="243273.MG_166"/>
<dbReference type="GeneID" id="88282299"/>
<dbReference type="KEGG" id="mge:MG_166"/>
<dbReference type="eggNOG" id="COG0097">
    <property type="taxonomic scope" value="Bacteria"/>
</dbReference>
<dbReference type="HOGENOM" id="CLU_065464_1_2_14"/>
<dbReference type="InParanoid" id="P47412"/>
<dbReference type="OrthoDB" id="9805007at2"/>
<dbReference type="BioCyc" id="MGEN243273:G1GJ2-190-MONOMER"/>
<dbReference type="Proteomes" id="UP000000807">
    <property type="component" value="Chromosome"/>
</dbReference>
<dbReference type="GO" id="GO:0022625">
    <property type="term" value="C:cytosolic large ribosomal subunit"/>
    <property type="evidence" value="ECO:0000318"/>
    <property type="project" value="GO_Central"/>
</dbReference>
<dbReference type="GO" id="GO:0019843">
    <property type="term" value="F:rRNA binding"/>
    <property type="evidence" value="ECO:0007669"/>
    <property type="project" value="UniProtKB-UniRule"/>
</dbReference>
<dbReference type="GO" id="GO:0003735">
    <property type="term" value="F:structural constituent of ribosome"/>
    <property type="evidence" value="ECO:0000318"/>
    <property type="project" value="GO_Central"/>
</dbReference>
<dbReference type="GO" id="GO:0002181">
    <property type="term" value="P:cytoplasmic translation"/>
    <property type="evidence" value="ECO:0000318"/>
    <property type="project" value="GO_Central"/>
</dbReference>
<dbReference type="FunFam" id="3.90.930.12:FF:000001">
    <property type="entry name" value="50S ribosomal protein L6"/>
    <property type="match status" value="1"/>
</dbReference>
<dbReference type="Gene3D" id="3.90.930.12">
    <property type="entry name" value="Ribosomal protein L6, alpha-beta domain"/>
    <property type="match status" value="2"/>
</dbReference>
<dbReference type="HAMAP" id="MF_01365_B">
    <property type="entry name" value="Ribosomal_uL6_B"/>
    <property type="match status" value="1"/>
</dbReference>
<dbReference type="InterPro" id="IPR000702">
    <property type="entry name" value="Ribosomal_uL6-like"/>
</dbReference>
<dbReference type="InterPro" id="IPR036789">
    <property type="entry name" value="Ribosomal_uL6-like_a/b-dom_sf"/>
</dbReference>
<dbReference type="InterPro" id="IPR020040">
    <property type="entry name" value="Ribosomal_uL6_a/b-dom"/>
</dbReference>
<dbReference type="InterPro" id="IPR019906">
    <property type="entry name" value="Ribosomal_uL6_bac-type"/>
</dbReference>
<dbReference type="InterPro" id="IPR002358">
    <property type="entry name" value="Ribosomal_uL6_CS"/>
</dbReference>
<dbReference type="NCBIfam" id="TIGR03654">
    <property type="entry name" value="L6_bact"/>
    <property type="match status" value="1"/>
</dbReference>
<dbReference type="PANTHER" id="PTHR11655">
    <property type="entry name" value="60S/50S RIBOSOMAL PROTEIN L6/L9"/>
    <property type="match status" value="1"/>
</dbReference>
<dbReference type="PANTHER" id="PTHR11655:SF14">
    <property type="entry name" value="LARGE RIBOSOMAL SUBUNIT PROTEIN UL6M"/>
    <property type="match status" value="1"/>
</dbReference>
<dbReference type="Pfam" id="PF00347">
    <property type="entry name" value="Ribosomal_L6"/>
    <property type="match status" value="2"/>
</dbReference>
<dbReference type="PIRSF" id="PIRSF002162">
    <property type="entry name" value="Ribosomal_L6"/>
    <property type="match status" value="1"/>
</dbReference>
<dbReference type="PRINTS" id="PR00059">
    <property type="entry name" value="RIBOSOMALL6"/>
</dbReference>
<dbReference type="SUPFAM" id="SSF56053">
    <property type="entry name" value="Ribosomal protein L6"/>
    <property type="match status" value="2"/>
</dbReference>
<dbReference type="PROSITE" id="PS00525">
    <property type="entry name" value="RIBOSOMAL_L6_1"/>
    <property type="match status" value="1"/>
</dbReference>
<name>RL6_MYCGE</name>
<reference key="1">
    <citation type="journal article" date="1995" name="Science">
        <title>The minimal gene complement of Mycoplasma genitalium.</title>
        <authorList>
            <person name="Fraser C.M."/>
            <person name="Gocayne J.D."/>
            <person name="White O."/>
            <person name="Adams M.D."/>
            <person name="Clayton R.A."/>
            <person name="Fleischmann R.D."/>
            <person name="Bult C.J."/>
            <person name="Kerlavage A.R."/>
            <person name="Sutton G.G."/>
            <person name="Kelley J.M."/>
            <person name="Fritchman J.L."/>
            <person name="Weidman J.F."/>
            <person name="Small K.V."/>
            <person name="Sandusky M."/>
            <person name="Fuhrmann J.L."/>
            <person name="Nguyen D.T."/>
            <person name="Utterback T.R."/>
            <person name="Saudek D.M."/>
            <person name="Phillips C.A."/>
            <person name="Merrick J.M."/>
            <person name="Tomb J.-F."/>
            <person name="Dougherty B.A."/>
            <person name="Bott K.F."/>
            <person name="Hu P.-C."/>
            <person name="Lucier T.S."/>
            <person name="Peterson S.N."/>
            <person name="Smith H.O."/>
            <person name="Hutchison C.A. III"/>
            <person name="Venter J.C."/>
        </authorList>
    </citation>
    <scope>NUCLEOTIDE SEQUENCE [LARGE SCALE GENOMIC DNA]</scope>
    <source>
        <strain>ATCC 33530 / DSM 19775 / NCTC 10195 / G37</strain>
    </source>
</reference>
<gene>
    <name evidence="1" type="primary">rplF</name>
    <name evidence="1" type="synonym">rpl6</name>
    <name type="ordered locus">MG166</name>
</gene>
<organism>
    <name type="scientific">Mycoplasma genitalium (strain ATCC 33530 / DSM 19775 / NCTC 10195 / G37)</name>
    <name type="common">Mycoplasmoides genitalium</name>
    <dbReference type="NCBI Taxonomy" id="243273"/>
    <lineage>
        <taxon>Bacteria</taxon>
        <taxon>Bacillati</taxon>
        <taxon>Mycoplasmatota</taxon>
        <taxon>Mycoplasmoidales</taxon>
        <taxon>Mycoplasmoidaceae</taxon>
        <taxon>Mycoplasmoides</taxon>
    </lineage>
</organism>
<protein>
    <recommendedName>
        <fullName evidence="1">Large ribosomal subunit protein uL6</fullName>
    </recommendedName>
    <alternativeName>
        <fullName evidence="2">50S ribosomal protein L6</fullName>
    </alternativeName>
</protein>